<feature type="chain" id="PRO_1000199328" description="Phenylalanine--tRNA ligase alpha subunit">
    <location>
        <begin position="1"/>
        <end position="348"/>
    </location>
</feature>
<feature type="binding site" evidence="1">
    <location>
        <position position="262"/>
    </location>
    <ligand>
        <name>Mg(2+)</name>
        <dbReference type="ChEBI" id="CHEBI:18420"/>
        <note>shared with beta subunit</note>
    </ligand>
</feature>
<keyword id="KW-0030">Aminoacyl-tRNA synthetase</keyword>
<keyword id="KW-0067">ATP-binding</keyword>
<keyword id="KW-0963">Cytoplasm</keyword>
<keyword id="KW-0436">Ligase</keyword>
<keyword id="KW-0460">Magnesium</keyword>
<keyword id="KW-0479">Metal-binding</keyword>
<keyword id="KW-0547">Nucleotide-binding</keyword>
<keyword id="KW-0648">Protein biosynthesis</keyword>
<organism>
    <name type="scientific">Streptococcus pneumoniae (strain JJA)</name>
    <dbReference type="NCBI Taxonomy" id="488222"/>
    <lineage>
        <taxon>Bacteria</taxon>
        <taxon>Bacillati</taxon>
        <taxon>Bacillota</taxon>
        <taxon>Bacilli</taxon>
        <taxon>Lactobacillales</taxon>
        <taxon>Streptococcaceae</taxon>
        <taxon>Streptococcus</taxon>
    </lineage>
</organism>
<protein>
    <recommendedName>
        <fullName evidence="1">Phenylalanine--tRNA ligase alpha subunit</fullName>
        <ecNumber evidence="1">6.1.1.20</ecNumber>
    </recommendedName>
    <alternativeName>
        <fullName evidence="1">Phenylalanyl-tRNA synthetase alpha subunit</fullName>
        <shortName evidence="1">PheRS</shortName>
    </alternativeName>
</protein>
<comment type="catalytic activity">
    <reaction evidence="1">
        <text>tRNA(Phe) + L-phenylalanine + ATP = L-phenylalanyl-tRNA(Phe) + AMP + diphosphate + H(+)</text>
        <dbReference type="Rhea" id="RHEA:19413"/>
        <dbReference type="Rhea" id="RHEA-COMP:9668"/>
        <dbReference type="Rhea" id="RHEA-COMP:9699"/>
        <dbReference type="ChEBI" id="CHEBI:15378"/>
        <dbReference type="ChEBI" id="CHEBI:30616"/>
        <dbReference type="ChEBI" id="CHEBI:33019"/>
        <dbReference type="ChEBI" id="CHEBI:58095"/>
        <dbReference type="ChEBI" id="CHEBI:78442"/>
        <dbReference type="ChEBI" id="CHEBI:78531"/>
        <dbReference type="ChEBI" id="CHEBI:456215"/>
        <dbReference type="EC" id="6.1.1.20"/>
    </reaction>
</comment>
<comment type="cofactor">
    <cofactor evidence="1">
        <name>Mg(2+)</name>
        <dbReference type="ChEBI" id="CHEBI:18420"/>
    </cofactor>
    <text evidence="1">Binds 2 magnesium ions per tetramer.</text>
</comment>
<comment type="subunit">
    <text evidence="1">Tetramer of two alpha and two beta subunits.</text>
</comment>
<comment type="subcellular location">
    <subcellularLocation>
        <location evidence="1">Cytoplasm</location>
    </subcellularLocation>
</comment>
<comment type="similarity">
    <text evidence="1">Belongs to the class-II aminoacyl-tRNA synthetase family. Phe-tRNA synthetase alpha subunit type 1 subfamily.</text>
</comment>
<proteinExistence type="inferred from homology"/>
<dbReference type="EC" id="6.1.1.20" evidence="1"/>
<dbReference type="EMBL" id="CP000919">
    <property type="protein sequence ID" value="ACO18740.1"/>
    <property type="molecule type" value="Genomic_DNA"/>
</dbReference>
<dbReference type="RefSeq" id="WP_000103741.1">
    <property type="nucleotide sequence ID" value="NC_012466.1"/>
</dbReference>
<dbReference type="SMR" id="C1CCV6"/>
<dbReference type="KEGG" id="sjj:SPJ_0534"/>
<dbReference type="HOGENOM" id="CLU_025086_0_1_9"/>
<dbReference type="Proteomes" id="UP000002206">
    <property type="component" value="Chromosome"/>
</dbReference>
<dbReference type="GO" id="GO:0005737">
    <property type="term" value="C:cytoplasm"/>
    <property type="evidence" value="ECO:0007669"/>
    <property type="project" value="UniProtKB-SubCell"/>
</dbReference>
<dbReference type="GO" id="GO:0005524">
    <property type="term" value="F:ATP binding"/>
    <property type="evidence" value="ECO:0007669"/>
    <property type="project" value="UniProtKB-UniRule"/>
</dbReference>
<dbReference type="GO" id="GO:0140096">
    <property type="term" value="F:catalytic activity, acting on a protein"/>
    <property type="evidence" value="ECO:0007669"/>
    <property type="project" value="UniProtKB-ARBA"/>
</dbReference>
<dbReference type="GO" id="GO:0000287">
    <property type="term" value="F:magnesium ion binding"/>
    <property type="evidence" value="ECO:0007669"/>
    <property type="project" value="UniProtKB-UniRule"/>
</dbReference>
<dbReference type="GO" id="GO:0004826">
    <property type="term" value="F:phenylalanine-tRNA ligase activity"/>
    <property type="evidence" value="ECO:0007669"/>
    <property type="project" value="UniProtKB-UniRule"/>
</dbReference>
<dbReference type="GO" id="GO:0016740">
    <property type="term" value="F:transferase activity"/>
    <property type="evidence" value="ECO:0007669"/>
    <property type="project" value="UniProtKB-ARBA"/>
</dbReference>
<dbReference type="GO" id="GO:0000049">
    <property type="term" value="F:tRNA binding"/>
    <property type="evidence" value="ECO:0007669"/>
    <property type="project" value="InterPro"/>
</dbReference>
<dbReference type="GO" id="GO:0006432">
    <property type="term" value="P:phenylalanyl-tRNA aminoacylation"/>
    <property type="evidence" value="ECO:0007669"/>
    <property type="project" value="UniProtKB-UniRule"/>
</dbReference>
<dbReference type="CDD" id="cd00496">
    <property type="entry name" value="PheRS_alpha_core"/>
    <property type="match status" value="1"/>
</dbReference>
<dbReference type="FunFam" id="3.30.930.10:FF:000003">
    <property type="entry name" value="Phenylalanine--tRNA ligase alpha subunit"/>
    <property type="match status" value="1"/>
</dbReference>
<dbReference type="Gene3D" id="3.30.930.10">
    <property type="entry name" value="Bira Bifunctional Protein, Domain 2"/>
    <property type="match status" value="1"/>
</dbReference>
<dbReference type="HAMAP" id="MF_00281">
    <property type="entry name" value="Phe_tRNA_synth_alpha1"/>
    <property type="match status" value="1"/>
</dbReference>
<dbReference type="InterPro" id="IPR006195">
    <property type="entry name" value="aa-tRNA-synth_II"/>
</dbReference>
<dbReference type="InterPro" id="IPR045864">
    <property type="entry name" value="aa-tRNA-synth_II/BPL/LPL"/>
</dbReference>
<dbReference type="InterPro" id="IPR004529">
    <property type="entry name" value="Phe-tRNA-synth_IIc_asu"/>
</dbReference>
<dbReference type="InterPro" id="IPR004188">
    <property type="entry name" value="Phe-tRNA_ligase_II_N"/>
</dbReference>
<dbReference type="InterPro" id="IPR022911">
    <property type="entry name" value="Phe_tRNA_ligase_alpha1_bac"/>
</dbReference>
<dbReference type="InterPro" id="IPR002319">
    <property type="entry name" value="Phenylalanyl-tRNA_Synthase"/>
</dbReference>
<dbReference type="InterPro" id="IPR010978">
    <property type="entry name" value="tRNA-bd_arm"/>
</dbReference>
<dbReference type="NCBIfam" id="TIGR00468">
    <property type="entry name" value="pheS"/>
    <property type="match status" value="1"/>
</dbReference>
<dbReference type="PANTHER" id="PTHR11538:SF41">
    <property type="entry name" value="PHENYLALANINE--TRNA LIGASE, MITOCHONDRIAL"/>
    <property type="match status" value="1"/>
</dbReference>
<dbReference type="PANTHER" id="PTHR11538">
    <property type="entry name" value="PHENYLALANYL-TRNA SYNTHETASE"/>
    <property type="match status" value="1"/>
</dbReference>
<dbReference type="Pfam" id="PF02912">
    <property type="entry name" value="Phe_tRNA-synt_N"/>
    <property type="match status" value="1"/>
</dbReference>
<dbReference type="Pfam" id="PF01409">
    <property type="entry name" value="tRNA-synt_2d"/>
    <property type="match status" value="1"/>
</dbReference>
<dbReference type="SUPFAM" id="SSF55681">
    <property type="entry name" value="Class II aaRS and biotin synthetases"/>
    <property type="match status" value="1"/>
</dbReference>
<dbReference type="SUPFAM" id="SSF46589">
    <property type="entry name" value="tRNA-binding arm"/>
    <property type="match status" value="1"/>
</dbReference>
<dbReference type="PROSITE" id="PS50862">
    <property type="entry name" value="AA_TRNA_LIGASE_II"/>
    <property type="match status" value="1"/>
</dbReference>
<accession>C1CCV6</accession>
<name>SYFA_STRZJ</name>
<sequence length="348" mass="39144">MSTIEEQLKALREETLASLKQITAENEKEMQDLRVSVLGKKGSLTEILKGMKDVSAEMRPIIGKHVNEARDVLTAAFEETAKLLEEKKVAAQLASESIDVTLPGRPVAAGHRHVLTQTSEEIEDIFIGMGYQVVDGFEVEQDYYNFERMNLPKDHPARDMQDTFYITEEILLRTHTSPVQARAMDAHDFSKGPLKMISPGRVFRRDTDDATHSHQFHQIEGLVVGKNISMADLQGTLQLIVQKMFGEERQIRLRPSYFPFTEPSVEVDVSCFKCGGEGCNVCKKTGWIEIMGAGMVHPRVLEMSGIDATVYSGFAFGLGQERVAMLRYGINDIRGFYQGDVRFSEQFK</sequence>
<gene>
    <name evidence="1" type="primary">pheS</name>
    <name type="ordered locus">SPJ_0534</name>
</gene>
<evidence type="ECO:0000255" key="1">
    <source>
        <dbReference type="HAMAP-Rule" id="MF_00281"/>
    </source>
</evidence>
<reference key="1">
    <citation type="journal article" date="2010" name="Genome Biol.">
        <title>Structure and dynamics of the pan-genome of Streptococcus pneumoniae and closely related species.</title>
        <authorList>
            <person name="Donati C."/>
            <person name="Hiller N.L."/>
            <person name="Tettelin H."/>
            <person name="Muzzi A."/>
            <person name="Croucher N.J."/>
            <person name="Angiuoli S.V."/>
            <person name="Oggioni M."/>
            <person name="Dunning Hotopp J.C."/>
            <person name="Hu F.Z."/>
            <person name="Riley D.R."/>
            <person name="Covacci A."/>
            <person name="Mitchell T.J."/>
            <person name="Bentley S.D."/>
            <person name="Kilian M."/>
            <person name="Ehrlich G.D."/>
            <person name="Rappuoli R."/>
            <person name="Moxon E.R."/>
            <person name="Masignani V."/>
        </authorList>
    </citation>
    <scope>NUCLEOTIDE SEQUENCE [LARGE SCALE GENOMIC DNA]</scope>
    <source>
        <strain>JJA</strain>
    </source>
</reference>